<reference key="1">
    <citation type="journal article" date="1990" name="Virology">
        <title>Genome organization and taxonomic position of human papillomavirus type 47 inferred from its DNA sequence.</title>
        <authorList>
            <person name="Kiyono T."/>
            <person name="Adachi A."/>
            <person name="Ishibashi M."/>
        </authorList>
    </citation>
    <scope>NUCLEOTIDE SEQUENCE [GENOMIC DNA]</scope>
</reference>
<organismHost>
    <name type="scientific">Homo sapiens</name>
    <name type="common">Human</name>
    <dbReference type="NCBI Taxonomy" id="9606"/>
</organismHost>
<protein>
    <recommendedName>
        <fullName evidence="1">Regulatory protein E2</fullName>
    </recommendedName>
</protein>
<feature type="chain" id="PRO_0000133225" description="Regulatory protein E2">
    <location>
        <begin position="1"/>
        <end position="506"/>
    </location>
</feature>
<feature type="region of interest" description="Transactivation domain" evidence="1">
    <location>
        <begin position="1"/>
        <end position="201"/>
    </location>
</feature>
<feature type="region of interest" description="Disordered" evidence="2">
    <location>
        <begin position="196"/>
        <end position="406"/>
    </location>
</feature>
<feature type="region of interest" description="DNA-binding domain" evidence="1">
    <location>
        <begin position="422"/>
        <end position="506"/>
    </location>
</feature>
<feature type="compositionally biased region" description="Low complexity" evidence="2">
    <location>
        <begin position="196"/>
        <end position="229"/>
    </location>
</feature>
<feature type="compositionally biased region" description="Polar residues" evidence="2">
    <location>
        <begin position="232"/>
        <end position="243"/>
    </location>
</feature>
<feature type="compositionally biased region" description="Basic residues" evidence="2">
    <location>
        <begin position="248"/>
        <end position="274"/>
    </location>
</feature>
<feature type="compositionally biased region" description="Low complexity" evidence="2">
    <location>
        <begin position="275"/>
        <end position="297"/>
    </location>
</feature>
<feature type="compositionally biased region" description="Low complexity" evidence="2">
    <location>
        <begin position="310"/>
        <end position="339"/>
    </location>
</feature>
<feature type="compositionally biased region" description="Basic and acidic residues" evidence="2">
    <location>
        <begin position="379"/>
        <end position="389"/>
    </location>
</feature>
<gene>
    <name evidence="1" type="primary">E2</name>
</gene>
<comment type="function">
    <text evidence="1">Plays a role in the initiation of viral DNA replication. A dimer of E2 interacts with a dimer of E1 in order to improve specificity of E1 DNA binding activity. Once the complex recognizes and binds DNA at specific sites, the E2 dimer is removed from DNA. E2 also regulates viral transcription through binding to the E2RE response element (5'-ACCNNNNNNGGT-3') present in multiple copies in the regulatory regions of the viral genome. Activates or represses transcription depending on E2RE's position with regards to proximal promoter elements including the TATA-box. Repression occurs by sterically hindering the assembly of the transcription initiation complex.</text>
</comment>
<comment type="subunit">
    <text evidence="1">Binds DNA as homodimer. Interacts with protein E1; this interaction greatly increases E1 DNA-binding activity. Interacts with protein L1; this interaction enhances E2-dependent replication and transcription activation. Interacts with protein L2; this interaction inhibits E2 transcriptional activity but not DNA replication function E2. Interacts with protein E7; this interaction inhibits E7 oncogenic activity. Interacts with host TAF1; this interaction modulates E2-dependent transcriptional regulation. Interacts with host BRD4; this interaction mediates E2 transcriptional activation function. Additionally, the interaction with host BRD4 on mitotic chromosomes mediates tethering of the viral genome. Interacts with host TOPBP1; this interaction is required for optimal viral DNA replication.</text>
</comment>
<comment type="subcellular location">
    <subcellularLocation>
        <location evidence="1">Host nucleus</location>
    </subcellularLocation>
</comment>
<comment type="PTM">
    <text evidence="1">Phosphorylated.</text>
</comment>
<comment type="similarity">
    <text evidence="1">Belongs to the papillomaviridae E2 protein family.</text>
</comment>
<sequence length="506" mass="57478">MENLSERFNALQEQLMNIYEAAEQTLKAQILHWQTLRKEAVTLYFARQKGINRLGYQPVPALAISEARAKEAIYMVLQLESLQKSAFALEPWTLVDTSTETFKSAPENHFKKGPVPVEVIYDKDEANANLYTMWTFVYYMDSDDVWHKTTSGVNQTGIYYLYGTFKHYYVLFADDAKRYSATGEWEVKVNKETVFTPVTSSTPPGSPGGQTDPDTSSKTPTTTTAATDTSPRRQSINKQSQQTETKRRGYGRRPSSRTRRPQTHQRRSRSRSRSRSSSQTHSSTTTTTTTYRSRSTSLNKTRARSRSRSTSRSTSTTSRRGGRGSSTRQRSRSPSTYTSKRSREGNTRGRGRGRQGRAGSSGGREQRRRRRSFSTSPDSSKRVRRESPKYRGVSPSEVGKQLRSVGAKHSGRLGRLLEEARDPPVILVRGDANTLKCFRNRARNKYRGLFRSFSTTFSWVAGDSIERLGRSRMLISFSCLTQRRDFDDAVKYPKGVEWSYGSLDSL</sequence>
<organism>
    <name type="scientific">Human papillomavirus 47</name>
    <dbReference type="NCBI Taxonomy" id="10594"/>
    <lineage>
        <taxon>Viruses</taxon>
        <taxon>Monodnaviria</taxon>
        <taxon>Shotokuvirae</taxon>
        <taxon>Cossaviricota</taxon>
        <taxon>Papovaviricetes</taxon>
        <taxon>Zurhausenvirales</taxon>
        <taxon>Papillomaviridae</taxon>
        <taxon>Firstpapillomavirinae</taxon>
        <taxon>Betapapillomavirus</taxon>
        <taxon>Betapapillomavirus 1</taxon>
    </lineage>
</organism>
<accession>P22420</accession>
<dbReference type="EMBL" id="M32305">
    <property type="protein sequence ID" value="AAA46979.1"/>
    <property type="molecule type" value="Genomic_DNA"/>
</dbReference>
<dbReference type="PIR" id="D35324">
    <property type="entry name" value="W2WL47"/>
</dbReference>
<dbReference type="SMR" id="P22420"/>
<dbReference type="Proteomes" id="UP000008697">
    <property type="component" value="Genome"/>
</dbReference>
<dbReference type="GO" id="GO:0042025">
    <property type="term" value="C:host cell nucleus"/>
    <property type="evidence" value="ECO:0007669"/>
    <property type="project" value="UniProtKB-SubCell"/>
</dbReference>
<dbReference type="GO" id="GO:0003677">
    <property type="term" value="F:DNA binding"/>
    <property type="evidence" value="ECO:0007669"/>
    <property type="project" value="UniProtKB-UniRule"/>
</dbReference>
<dbReference type="GO" id="GO:0003700">
    <property type="term" value="F:DNA-binding transcription factor activity"/>
    <property type="evidence" value="ECO:0007669"/>
    <property type="project" value="UniProtKB-UniRule"/>
</dbReference>
<dbReference type="GO" id="GO:0000166">
    <property type="term" value="F:nucleotide binding"/>
    <property type="evidence" value="ECO:0007669"/>
    <property type="project" value="UniProtKB-UniRule"/>
</dbReference>
<dbReference type="GO" id="GO:0006260">
    <property type="term" value="P:DNA replication"/>
    <property type="evidence" value="ECO:0007669"/>
    <property type="project" value="UniProtKB-KW"/>
</dbReference>
<dbReference type="GO" id="GO:0006351">
    <property type="term" value="P:DNA-templated transcription"/>
    <property type="evidence" value="ECO:0007669"/>
    <property type="project" value="UniProtKB-UniRule"/>
</dbReference>
<dbReference type="GO" id="GO:0006275">
    <property type="term" value="P:regulation of DNA replication"/>
    <property type="evidence" value="ECO:0007669"/>
    <property type="project" value="UniProtKB-UniRule"/>
</dbReference>
<dbReference type="GO" id="GO:0039693">
    <property type="term" value="P:viral DNA genome replication"/>
    <property type="evidence" value="ECO:0007669"/>
    <property type="project" value="UniProtKB-UniRule"/>
</dbReference>
<dbReference type="Gene3D" id="3.30.70.330">
    <property type="match status" value="1"/>
</dbReference>
<dbReference type="Gene3D" id="1.10.287.30">
    <property type="entry name" value="E2 (early) protein, N terminal domain, subdomain 1"/>
    <property type="match status" value="1"/>
</dbReference>
<dbReference type="Gene3D" id="2.170.200.10">
    <property type="entry name" value="Papillomavirus E2 early protein domain"/>
    <property type="match status" value="1"/>
</dbReference>
<dbReference type="HAMAP" id="MF_04001">
    <property type="entry name" value="PPV_E2"/>
    <property type="match status" value="1"/>
</dbReference>
<dbReference type="InterPro" id="IPR035975">
    <property type="entry name" value="E2/EBNA1_C_sf"/>
</dbReference>
<dbReference type="InterPro" id="IPR012677">
    <property type="entry name" value="Nucleotide-bd_a/b_plait_sf"/>
</dbReference>
<dbReference type="InterPro" id="IPR000427">
    <property type="entry name" value="Papillomavirus_E2_C"/>
</dbReference>
<dbReference type="InterPro" id="IPR001866">
    <property type="entry name" value="PPV_E2_N"/>
</dbReference>
<dbReference type="InterPro" id="IPR033668">
    <property type="entry name" value="Reg_prot_E2"/>
</dbReference>
<dbReference type="InterPro" id="IPR036050">
    <property type="entry name" value="Regulatory_protein_E2_N"/>
</dbReference>
<dbReference type="InterPro" id="IPR042503">
    <property type="entry name" value="Regulatory_protein_E2_N_1"/>
</dbReference>
<dbReference type="InterPro" id="IPR042504">
    <property type="entry name" value="Regulatory_protein_E2_N_2"/>
</dbReference>
<dbReference type="Pfam" id="PF00511">
    <property type="entry name" value="PPV_E2_C"/>
    <property type="match status" value="1"/>
</dbReference>
<dbReference type="Pfam" id="PF00508">
    <property type="entry name" value="PPV_E2_N"/>
    <property type="match status" value="1"/>
</dbReference>
<dbReference type="SUPFAM" id="SSF51332">
    <property type="entry name" value="E2 regulatory, transactivation domain"/>
    <property type="match status" value="1"/>
</dbReference>
<dbReference type="SUPFAM" id="SSF54957">
    <property type="entry name" value="Viral DNA-binding domain"/>
    <property type="match status" value="1"/>
</dbReference>
<evidence type="ECO:0000255" key="1">
    <source>
        <dbReference type="HAMAP-Rule" id="MF_04001"/>
    </source>
</evidence>
<evidence type="ECO:0000256" key="2">
    <source>
        <dbReference type="SAM" id="MobiDB-lite"/>
    </source>
</evidence>
<proteinExistence type="inferred from homology"/>
<keyword id="KW-0010">Activator</keyword>
<keyword id="KW-0235">DNA replication</keyword>
<keyword id="KW-0238">DNA-binding</keyword>
<keyword id="KW-0244">Early protein</keyword>
<keyword id="KW-1048">Host nucleus</keyword>
<keyword id="KW-0597">Phosphoprotein</keyword>
<keyword id="KW-0678">Repressor</keyword>
<keyword id="KW-0804">Transcription</keyword>
<keyword id="KW-0805">Transcription regulation</keyword>
<name>VE2_HPV47</name>